<evidence type="ECO:0000255" key="1">
    <source>
        <dbReference type="HAMAP-Rule" id="MF_00268"/>
    </source>
</evidence>
<evidence type="ECO:0000256" key="2">
    <source>
        <dbReference type="SAM" id="MobiDB-lite"/>
    </source>
</evidence>
<proteinExistence type="inferred from homology"/>
<sequence length="359" mass="38834">MSKEKALESALSQIEKQFGKGAIMRLGDQEAAHDIDVIPSGIIALDVALGIGGYPKGRIIEIYGHESSGKTTLTLLAIAQCQKQGGTAAFVDAEHALDPKYAKLLGVDVDNLIVSQPDTGEQALEIADMLVRSGGVDIVVIDSVAALTPKAEIEGDMGDSHMGLQARLMSQALRKLTANIKRSNTLVIFINQIRMKIGVMFGNPETTTGGNALKFYSSVRLEVKKGGSIKDGIDVSGNEIKVKVVKNKVAPPFKQADFELIYGEGISLEAELIDLGAKYNIIEKSGAWYSYKGKKIGQGKEKSKEYLKENTAERDEIERAILELLLPNKYSNKDSNDSPKEGSKIKTKVNPAVTQDELI</sequence>
<organism>
    <name type="scientific">Francisella tularensis subsp. holarctica (strain LVS)</name>
    <dbReference type="NCBI Taxonomy" id="376619"/>
    <lineage>
        <taxon>Bacteria</taxon>
        <taxon>Pseudomonadati</taxon>
        <taxon>Pseudomonadota</taxon>
        <taxon>Gammaproteobacteria</taxon>
        <taxon>Thiotrichales</taxon>
        <taxon>Francisellaceae</taxon>
        <taxon>Francisella</taxon>
    </lineage>
</organism>
<accession>Q2A629</accession>
<comment type="function">
    <text evidence="1">Can catalyze the hydrolysis of ATP in the presence of single-stranded DNA, the ATP-dependent uptake of single-stranded DNA by duplex DNA, and the ATP-dependent hybridization of homologous single-stranded DNAs. It interacts with LexA causing its activation and leading to its autocatalytic cleavage.</text>
</comment>
<comment type="subcellular location">
    <subcellularLocation>
        <location evidence="1">Cytoplasm</location>
    </subcellularLocation>
</comment>
<comment type="similarity">
    <text evidence="1">Belongs to the RecA family.</text>
</comment>
<dbReference type="EMBL" id="AM233362">
    <property type="protein sequence ID" value="CAJ78453.1"/>
    <property type="molecule type" value="Genomic_DNA"/>
</dbReference>
<dbReference type="RefSeq" id="WP_003013734.1">
    <property type="nucleotide sequence ID" value="NZ_CP009694.1"/>
</dbReference>
<dbReference type="SMR" id="Q2A629"/>
<dbReference type="KEGG" id="ftl:FTL_0012"/>
<dbReference type="Proteomes" id="UP000001944">
    <property type="component" value="Chromosome"/>
</dbReference>
<dbReference type="GO" id="GO:0005829">
    <property type="term" value="C:cytosol"/>
    <property type="evidence" value="ECO:0007669"/>
    <property type="project" value="TreeGrafter"/>
</dbReference>
<dbReference type="GO" id="GO:0005524">
    <property type="term" value="F:ATP binding"/>
    <property type="evidence" value="ECO:0007669"/>
    <property type="project" value="UniProtKB-UniRule"/>
</dbReference>
<dbReference type="GO" id="GO:0016887">
    <property type="term" value="F:ATP hydrolysis activity"/>
    <property type="evidence" value="ECO:0007669"/>
    <property type="project" value="InterPro"/>
</dbReference>
<dbReference type="GO" id="GO:0140664">
    <property type="term" value="F:ATP-dependent DNA damage sensor activity"/>
    <property type="evidence" value="ECO:0007669"/>
    <property type="project" value="InterPro"/>
</dbReference>
<dbReference type="GO" id="GO:0003684">
    <property type="term" value="F:damaged DNA binding"/>
    <property type="evidence" value="ECO:0007669"/>
    <property type="project" value="UniProtKB-UniRule"/>
</dbReference>
<dbReference type="GO" id="GO:0003697">
    <property type="term" value="F:single-stranded DNA binding"/>
    <property type="evidence" value="ECO:0007669"/>
    <property type="project" value="UniProtKB-UniRule"/>
</dbReference>
<dbReference type="GO" id="GO:0006310">
    <property type="term" value="P:DNA recombination"/>
    <property type="evidence" value="ECO:0007669"/>
    <property type="project" value="UniProtKB-UniRule"/>
</dbReference>
<dbReference type="GO" id="GO:0006281">
    <property type="term" value="P:DNA repair"/>
    <property type="evidence" value="ECO:0007669"/>
    <property type="project" value="UniProtKB-UniRule"/>
</dbReference>
<dbReference type="GO" id="GO:0009432">
    <property type="term" value="P:SOS response"/>
    <property type="evidence" value="ECO:0007669"/>
    <property type="project" value="UniProtKB-UniRule"/>
</dbReference>
<dbReference type="CDD" id="cd00983">
    <property type="entry name" value="RecA"/>
    <property type="match status" value="1"/>
</dbReference>
<dbReference type="FunFam" id="3.40.50.300:FF:000087">
    <property type="entry name" value="Recombinase RecA"/>
    <property type="match status" value="1"/>
</dbReference>
<dbReference type="Gene3D" id="3.40.50.300">
    <property type="entry name" value="P-loop containing nucleotide triphosphate hydrolases"/>
    <property type="match status" value="1"/>
</dbReference>
<dbReference type="HAMAP" id="MF_00268">
    <property type="entry name" value="RecA"/>
    <property type="match status" value="1"/>
</dbReference>
<dbReference type="InterPro" id="IPR003593">
    <property type="entry name" value="AAA+_ATPase"/>
</dbReference>
<dbReference type="InterPro" id="IPR013765">
    <property type="entry name" value="DNA_recomb/repair_RecA"/>
</dbReference>
<dbReference type="InterPro" id="IPR020584">
    <property type="entry name" value="DNA_recomb/repair_RecA_CS"/>
</dbReference>
<dbReference type="InterPro" id="IPR027417">
    <property type="entry name" value="P-loop_NTPase"/>
</dbReference>
<dbReference type="InterPro" id="IPR049261">
    <property type="entry name" value="RecA-like_C"/>
</dbReference>
<dbReference type="InterPro" id="IPR049428">
    <property type="entry name" value="RecA-like_N"/>
</dbReference>
<dbReference type="InterPro" id="IPR020588">
    <property type="entry name" value="RecA_ATP-bd"/>
</dbReference>
<dbReference type="InterPro" id="IPR023400">
    <property type="entry name" value="RecA_C_sf"/>
</dbReference>
<dbReference type="InterPro" id="IPR020587">
    <property type="entry name" value="RecA_monomer-monomer_interface"/>
</dbReference>
<dbReference type="NCBIfam" id="TIGR02012">
    <property type="entry name" value="tigrfam_recA"/>
    <property type="match status" value="1"/>
</dbReference>
<dbReference type="PANTHER" id="PTHR45900:SF1">
    <property type="entry name" value="MITOCHONDRIAL DNA REPAIR PROTEIN RECA HOMOLOG-RELATED"/>
    <property type="match status" value="1"/>
</dbReference>
<dbReference type="PANTHER" id="PTHR45900">
    <property type="entry name" value="RECA"/>
    <property type="match status" value="1"/>
</dbReference>
<dbReference type="Pfam" id="PF00154">
    <property type="entry name" value="RecA"/>
    <property type="match status" value="1"/>
</dbReference>
<dbReference type="Pfam" id="PF21096">
    <property type="entry name" value="RecA_C"/>
    <property type="match status" value="1"/>
</dbReference>
<dbReference type="PRINTS" id="PR00142">
    <property type="entry name" value="RECA"/>
</dbReference>
<dbReference type="SMART" id="SM00382">
    <property type="entry name" value="AAA"/>
    <property type="match status" value="1"/>
</dbReference>
<dbReference type="SUPFAM" id="SSF52540">
    <property type="entry name" value="P-loop containing nucleoside triphosphate hydrolases"/>
    <property type="match status" value="1"/>
</dbReference>
<dbReference type="SUPFAM" id="SSF54752">
    <property type="entry name" value="RecA protein, C-terminal domain"/>
    <property type="match status" value="1"/>
</dbReference>
<dbReference type="PROSITE" id="PS00321">
    <property type="entry name" value="RECA_1"/>
    <property type="match status" value="1"/>
</dbReference>
<dbReference type="PROSITE" id="PS50162">
    <property type="entry name" value="RECA_2"/>
    <property type="match status" value="1"/>
</dbReference>
<dbReference type="PROSITE" id="PS50163">
    <property type="entry name" value="RECA_3"/>
    <property type="match status" value="1"/>
</dbReference>
<feature type="chain" id="PRO_1000047921" description="Protein RecA">
    <location>
        <begin position="1"/>
        <end position="359"/>
    </location>
</feature>
<feature type="region of interest" description="Disordered" evidence="2">
    <location>
        <begin position="329"/>
        <end position="359"/>
    </location>
</feature>
<feature type="compositionally biased region" description="Basic and acidic residues" evidence="2">
    <location>
        <begin position="331"/>
        <end position="344"/>
    </location>
</feature>
<feature type="binding site" evidence="1">
    <location>
        <begin position="64"/>
        <end position="71"/>
    </location>
    <ligand>
        <name>ATP</name>
        <dbReference type="ChEBI" id="CHEBI:30616"/>
    </ligand>
</feature>
<gene>
    <name evidence="1" type="primary">recA</name>
    <name type="ordered locus">FTL_0012</name>
</gene>
<name>RECA_FRATH</name>
<keyword id="KW-0067">ATP-binding</keyword>
<keyword id="KW-0963">Cytoplasm</keyword>
<keyword id="KW-0227">DNA damage</keyword>
<keyword id="KW-0233">DNA recombination</keyword>
<keyword id="KW-0234">DNA repair</keyword>
<keyword id="KW-0238">DNA-binding</keyword>
<keyword id="KW-0547">Nucleotide-binding</keyword>
<keyword id="KW-1185">Reference proteome</keyword>
<keyword id="KW-0742">SOS response</keyword>
<protein>
    <recommendedName>
        <fullName evidence="1">Protein RecA</fullName>
    </recommendedName>
    <alternativeName>
        <fullName evidence="1">Recombinase A</fullName>
    </alternativeName>
</protein>
<reference key="1">
    <citation type="submission" date="2006-03" db="EMBL/GenBank/DDBJ databases">
        <title>Complete genome sequence of Francisella tularensis LVS (Live Vaccine Strain).</title>
        <authorList>
            <person name="Chain P."/>
            <person name="Larimer F."/>
            <person name="Land M."/>
            <person name="Stilwagen S."/>
            <person name="Larsson P."/>
            <person name="Bearden S."/>
            <person name="Chu M."/>
            <person name="Oyston P."/>
            <person name="Forsman M."/>
            <person name="Andersson S."/>
            <person name="Lindler L."/>
            <person name="Titball R."/>
            <person name="Garcia E."/>
        </authorList>
    </citation>
    <scope>NUCLEOTIDE SEQUENCE [LARGE SCALE GENOMIC DNA]</scope>
    <source>
        <strain>LVS</strain>
    </source>
</reference>